<accession>Q8LX30</accession>
<feature type="chain" id="PRO_0000183351" description="Cytochrome c oxidase subunit 1">
    <location>
        <begin position="1"/>
        <end position="513"/>
    </location>
</feature>
<feature type="topological domain" description="Mitochondrial matrix" evidence="2">
    <location>
        <begin position="1"/>
        <end position="11"/>
    </location>
</feature>
<feature type="transmembrane region" description="Helical; Name=I" evidence="2">
    <location>
        <begin position="12"/>
        <end position="40"/>
    </location>
</feature>
<feature type="topological domain" description="Mitochondrial intermembrane" evidence="2">
    <location>
        <begin position="41"/>
        <end position="50"/>
    </location>
</feature>
<feature type="transmembrane region" description="Helical; Name=II" evidence="2">
    <location>
        <begin position="51"/>
        <end position="86"/>
    </location>
</feature>
<feature type="topological domain" description="Mitochondrial matrix" evidence="2">
    <location>
        <begin position="87"/>
        <end position="94"/>
    </location>
</feature>
<feature type="transmembrane region" description="Helical; Name=III" evidence="2">
    <location>
        <begin position="95"/>
        <end position="117"/>
    </location>
</feature>
<feature type="topological domain" description="Mitochondrial intermembrane" evidence="2">
    <location>
        <begin position="118"/>
        <end position="140"/>
    </location>
</feature>
<feature type="transmembrane region" description="Helical; Name=IV" evidence="2">
    <location>
        <begin position="141"/>
        <end position="170"/>
    </location>
</feature>
<feature type="topological domain" description="Mitochondrial matrix" evidence="2">
    <location>
        <begin position="171"/>
        <end position="182"/>
    </location>
</feature>
<feature type="transmembrane region" description="Helical; Name=V" evidence="2">
    <location>
        <begin position="183"/>
        <end position="212"/>
    </location>
</feature>
<feature type="topological domain" description="Mitochondrial intermembrane" evidence="2">
    <location>
        <begin position="213"/>
        <end position="227"/>
    </location>
</feature>
<feature type="transmembrane region" description="Helical; Name=VI" evidence="2">
    <location>
        <begin position="228"/>
        <end position="261"/>
    </location>
</feature>
<feature type="topological domain" description="Mitochondrial matrix" evidence="2">
    <location>
        <begin position="262"/>
        <end position="269"/>
    </location>
</feature>
<feature type="transmembrane region" description="Helical; Name=VII" evidence="2">
    <location>
        <begin position="270"/>
        <end position="286"/>
    </location>
</feature>
<feature type="topological domain" description="Mitochondrial intermembrane" evidence="2">
    <location>
        <begin position="287"/>
        <end position="298"/>
    </location>
</feature>
<feature type="transmembrane region" description="Helical; Name=VIII" evidence="2">
    <location>
        <begin position="299"/>
        <end position="327"/>
    </location>
</feature>
<feature type="topological domain" description="Mitochondrial matrix" evidence="2">
    <location>
        <begin position="328"/>
        <end position="335"/>
    </location>
</feature>
<feature type="transmembrane region" description="Helical; Name=IX" evidence="2">
    <location>
        <begin position="336"/>
        <end position="357"/>
    </location>
</feature>
<feature type="topological domain" description="Mitochondrial intermembrane" evidence="2">
    <location>
        <begin position="358"/>
        <end position="370"/>
    </location>
</feature>
<feature type="transmembrane region" description="Helical; Name=X" evidence="2">
    <location>
        <begin position="371"/>
        <end position="400"/>
    </location>
</feature>
<feature type="topological domain" description="Mitochondrial matrix" evidence="2">
    <location>
        <begin position="401"/>
        <end position="406"/>
    </location>
</feature>
<feature type="transmembrane region" description="Helical; Name=XI" evidence="2">
    <location>
        <begin position="407"/>
        <end position="433"/>
    </location>
</feature>
<feature type="topological domain" description="Mitochondrial intermembrane" evidence="2">
    <location>
        <begin position="434"/>
        <end position="446"/>
    </location>
</feature>
<feature type="transmembrane region" description="Helical; Name=XII" evidence="2">
    <location>
        <begin position="447"/>
        <end position="478"/>
    </location>
</feature>
<feature type="topological domain" description="Mitochondrial matrix" evidence="2">
    <location>
        <begin position="479"/>
        <end position="513"/>
    </location>
</feature>
<feature type="binding site" evidence="2">
    <location>
        <position position="40"/>
    </location>
    <ligand>
        <name>Na(+)</name>
        <dbReference type="ChEBI" id="CHEBI:29101"/>
    </ligand>
</feature>
<feature type="binding site" evidence="2">
    <location>
        <position position="45"/>
    </location>
    <ligand>
        <name>Na(+)</name>
        <dbReference type="ChEBI" id="CHEBI:29101"/>
    </ligand>
</feature>
<feature type="binding site" description="axial binding residue" evidence="2">
    <location>
        <position position="61"/>
    </location>
    <ligand>
        <name>Fe(II)-heme a</name>
        <dbReference type="ChEBI" id="CHEBI:61715"/>
        <note>low-spin</note>
    </ligand>
    <ligandPart>
        <name>Fe</name>
        <dbReference type="ChEBI" id="CHEBI:18248"/>
    </ligandPart>
</feature>
<feature type="binding site" evidence="2">
    <location>
        <position position="240"/>
    </location>
    <ligand>
        <name>Cu cation</name>
        <dbReference type="ChEBI" id="CHEBI:23378"/>
        <label>B</label>
    </ligand>
</feature>
<feature type="binding site" evidence="2">
    <location>
        <position position="244"/>
    </location>
    <ligand>
        <name>O2</name>
        <dbReference type="ChEBI" id="CHEBI:15379"/>
    </ligand>
</feature>
<feature type="binding site" evidence="2">
    <location>
        <position position="290"/>
    </location>
    <ligand>
        <name>Cu cation</name>
        <dbReference type="ChEBI" id="CHEBI:23378"/>
        <label>B</label>
    </ligand>
</feature>
<feature type="binding site" evidence="2">
    <location>
        <position position="291"/>
    </location>
    <ligand>
        <name>Cu cation</name>
        <dbReference type="ChEBI" id="CHEBI:23378"/>
        <label>B</label>
    </ligand>
</feature>
<feature type="binding site" evidence="2">
    <location>
        <position position="368"/>
    </location>
    <ligand>
        <name>Mg(2+)</name>
        <dbReference type="ChEBI" id="CHEBI:18420"/>
        <note>ligand shared with MT-CO2</note>
    </ligand>
</feature>
<feature type="binding site" evidence="2">
    <location>
        <position position="369"/>
    </location>
    <ligand>
        <name>Mg(2+)</name>
        <dbReference type="ChEBI" id="CHEBI:18420"/>
        <note>ligand shared with MT-CO2</note>
    </ligand>
</feature>
<feature type="binding site" description="axial binding residue" evidence="2">
    <location>
        <position position="376"/>
    </location>
    <ligand>
        <name>heme a3</name>
        <dbReference type="ChEBI" id="CHEBI:83282"/>
        <note>high-spin</note>
    </ligand>
    <ligandPart>
        <name>Fe</name>
        <dbReference type="ChEBI" id="CHEBI:18248"/>
    </ligandPart>
</feature>
<feature type="binding site" description="axial binding residue" evidence="2">
    <location>
        <position position="378"/>
    </location>
    <ligand>
        <name>Fe(II)-heme a</name>
        <dbReference type="ChEBI" id="CHEBI:61715"/>
        <note>low-spin</note>
    </ligand>
    <ligandPart>
        <name>Fe</name>
        <dbReference type="ChEBI" id="CHEBI:18248"/>
    </ligandPart>
</feature>
<feature type="binding site" evidence="2">
    <location>
        <position position="441"/>
    </location>
    <ligand>
        <name>Na(+)</name>
        <dbReference type="ChEBI" id="CHEBI:29101"/>
    </ligand>
</feature>
<feature type="cross-link" description="1'-histidyl-3'-tyrosine (His-Tyr)" evidence="2">
    <location>
        <begin position="240"/>
        <end position="244"/>
    </location>
</feature>
<organism>
    <name type="scientific">Lemur catta</name>
    <name type="common">Ring-tailed lemur</name>
    <dbReference type="NCBI Taxonomy" id="9447"/>
    <lineage>
        <taxon>Eukaryota</taxon>
        <taxon>Metazoa</taxon>
        <taxon>Chordata</taxon>
        <taxon>Craniata</taxon>
        <taxon>Vertebrata</taxon>
        <taxon>Euteleostomi</taxon>
        <taxon>Mammalia</taxon>
        <taxon>Eutheria</taxon>
        <taxon>Euarchontoglires</taxon>
        <taxon>Primates</taxon>
        <taxon>Strepsirrhini</taxon>
        <taxon>Lemuriformes</taxon>
        <taxon>Lemuridae</taxon>
        <taxon>Lemur</taxon>
    </lineage>
</organism>
<geneLocation type="mitochondrion"/>
<proteinExistence type="inferred from homology"/>
<name>COX1_LEMCA</name>
<evidence type="ECO:0000250" key="1">
    <source>
        <dbReference type="UniProtKB" id="P00395"/>
    </source>
</evidence>
<evidence type="ECO:0000250" key="2">
    <source>
        <dbReference type="UniProtKB" id="P00396"/>
    </source>
</evidence>
<evidence type="ECO:0000250" key="3">
    <source>
        <dbReference type="UniProtKB" id="P00401"/>
    </source>
</evidence>
<evidence type="ECO:0000305" key="4"/>
<dbReference type="EC" id="7.1.1.9"/>
<dbReference type="EMBL" id="AJ421451">
    <property type="protein sequence ID" value="CAD13423.1"/>
    <property type="molecule type" value="Genomic_DNA"/>
</dbReference>
<dbReference type="RefSeq" id="NP_659290.1">
    <property type="nucleotide sequence ID" value="NC_004025.1"/>
</dbReference>
<dbReference type="SMR" id="Q8LX30"/>
<dbReference type="OrthoDB" id="10002679at2759"/>
<dbReference type="UniPathway" id="UPA00705"/>
<dbReference type="GO" id="GO:0005743">
    <property type="term" value="C:mitochondrial inner membrane"/>
    <property type="evidence" value="ECO:0007669"/>
    <property type="project" value="UniProtKB-SubCell"/>
</dbReference>
<dbReference type="GO" id="GO:0045277">
    <property type="term" value="C:respiratory chain complex IV"/>
    <property type="evidence" value="ECO:0000250"/>
    <property type="project" value="UniProtKB"/>
</dbReference>
<dbReference type="GO" id="GO:0004129">
    <property type="term" value="F:cytochrome-c oxidase activity"/>
    <property type="evidence" value="ECO:0007669"/>
    <property type="project" value="UniProtKB-EC"/>
</dbReference>
<dbReference type="GO" id="GO:0020037">
    <property type="term" value="F:heme binding"/>
    <property type="evidence" value="ECO:0007669"/>
    <property type="project" value="InterPro"/>
</dbReference>
<dbReference type="GO" id="GO:0046872">
    <property type="term" value="F:metal ion binding"/>
    <property type="evidence" value="ECO:0007669"/>
    <property type="project" value="UniProtKB-KW"/>
</dbReference>
<dbReference type="GO" id="GO:0015990">
    <property type="term" value="P:electron transport coupled proton transport"/>
    <property type="evidence" value="ECO:0007669"/>
    <property type="project" value="TreeGrafter"/>
</dbReference>
<dbReference type="GO" id="GO:0006123">
    <property type="term" value="P:mitochondrial electron transport, cytochrome c to oxygen"/>
    <property type="evidence" value="ECO:0007669"/>
    <property type="project" value="TreeGrafter"/>
</dbReference>
<dbReference type="CDD" id="cd01663">
    <property type="entry name" value="Cyt_c_Oxidase_I"/>
    <property type="match status" value="1"/>
</dbReference>
<dbReference type="FunFam" id="1.20.210.10:FF:000001">
    <property type="entry name" value="Cytochrome c oxidase subunit 1"/>
    <property type="match status" value="1"/>
</dbReference>
<dbReference type="Gene3D" id="1.20.210.10">
    <property type="entry name" value="Cytochrome c oxidase-like, subunit I domain"/>
    <property type="match status" value="1"/>
</dbReference>
<dbReference type="InterPro" id="IPR023616">
    <property type="entry name" value="Cyt_c_oxase-like_su1_dom"/>
</dbReference>
<dbReference type="InterPro" id="IPR036927">
    <property type="entry name" value="Cyt_c_oxase-like_su1_sf"/>
</dbReference>
<dbReference type="InterPro" id="IPR000883">
    <property type="entry name" value="Cyt_C_Oxase_1"/>
</dbReference>
<dbReference type="InterPro" id="IPR023615">
    <property type="entry name" value="Cyt_c_Oxase_su1_BS"/>
</dbReference>
<dbReference type="InterPro" id="IPR033944">
    <property type="entry name" value="Cyt_c_oxase_su1_dom"/>
</dbReference>
<dbReference type="PANTHER" id="PTHR10422">
    <property type="entry name" value="CYTOCHROME C OXIDASE SUBUNIT 1"/>
    <property type="match status" value="1"/>
</dbReference>
<dbReference type="PANTHER" id="PTHR10422:SF18">
    <property type="entry name" value="CYTOCHROME C OXIDASE SUBUNIT 1"/>
    <property type="match status" value="1"/>
</dbReference>
<dbReference type="Pfam" id="PF00115">
    <property type="entry name" value="COX1"/>
    <property type="match status" value="1"/>
</dbReference>
<dbReference type="PRINTS" id="PR01165">
    <property type="entry name" value="CYCOXIDASEI"/>
</dbReference>
<dbReference type="SUPFAM" id="SSF81442">
    <property type="entry name" value="Cytochrome c oxidase subunit I-like"/>
    <property type="match status" value="1"/>
</dbReference>
<dbReference type="PROSITE" id="PS50855">
    <property type="entry name" value="COX1"/>
    <property type="match status" value="1"/>
</dbReference>
<dbReference type="PROSITE" id="PS00077">
    <property type="entry name" value="COX1_CUB"/>
    <property type="match status" value="1"/>
</dbReference>
<reference key="1">
    <citation type="journal article" date="2002" name="Proc. Natl. Acad. Sci. U.S.A.">
        <title>Mammalian mitogenomic relationships and the root of the eutherian tree.</title>
        <authorList>
            <person name="Arnason U."/>
            <person name="Adegoke J.A."/>
            <person name="Bodin K."/>
            <person name="Born E.W."/>
            <person name="Esa Y.B."/>
            <person name="Gullberg A."/>
            <person name="Nilsson M."/>
            <person name="Short R.V."/>
            <person name="Xu X."/>
            <person name="Janke A."/>
        </authorList>
    </citation>
    <scope>NUCLEOTIDE SEQUENCE [GENOMIC DNA]</scope>
</reference>
<gene>
    <name type="primary">MT-CO1</name>
    <name type="synonym">COI</name>
    <name type="synonym">COXI</name>
    <name type="synonym">MTCO1</name>
</gene>
<sequence length="513" mass="56957">MFINRWFYSTNHKDIGTLYLLFGAWAGMVGTALSLLIRAELGQPGSLLGDDQIYNVVVTAHAFVMIFFMVMPIMIGGFGNWLVPLMIGAPDMAFPRMNNMSFWLLPPSFLLLLASSMVEAGAGTGWTVYPPLAGNLAHAGASVDLTIFSLHLAGVSSILGAINFITTVINMKPPAMSQYQTPLFVWSVMITAVLLLLSLPVLAAGITMLLTDRNLNTTFFDPAGGGDPILYQHLFWFFGHPEVYILILPGFGMISHIVTYYSGKKEPFGYMGMVWAMMSIGFLGFIVWAHHMFTVGMDVDTRAYFTSATMIIAIPTGVKVFSWLATLHGGNIKWSPAMLWALGFIFLFTVGGLTGIVLANSSLDIVLHDTYYVVAHFHYVLSMGAVFAIMGGFVHWFPLFSGYTLDNTWAKIHFSIMFVGVNMTFFPQHFLGLSGMPRRYSDYPDAYTMWNTVSSIGSFISLTAVMLMIFMIWEAFASKREVLMVELTPTNLEWLHGCPPPYHTFEEPAYVKV</sequence>
<keyword id="KW-0106">Calcium</keyword>
<keyword id="KW-0186">Copper</keyword>
<keyword id="KW-0249">Electron transport</keyword>
<keyword id="KW-0349">Heme</keyword>
<keyword id="KW-0408">Iron</keyword>
<keyword id="KW-0460">Magnesium</keyword>
<keyword id="KW-0472">Membrane</keyword>
<keyword id="KW-0479">Metal-binding</keyword>
<keyword id="KW-0496">Mitochondrion</keyword>
<keyword id="KW-0999">Mitochondrion inner membrane</keyword>
<keyword id="KW-0679">Respiratory chain</keyword>
<keyword id="KW-0915">Sodium</keyword>
<keyword id="KW-1278">Translocase</keyword>
<keyword id="KW-0812">Transmembrane</keyword>
<keyword id="KW-1133">Transmembrane helix</keyword>
<keyword id="KW-0813">Transport</keyword>
<comment type="function">
    <text evidence="3">Component of the cytochrome c oxidase, the last enzyme in the mitochondrial electron transport chain which drives oxidative phosphorylation. The respiratory chain contains 3 multisubunit complexes succinate dehydrogenase (complex II, CII), ubiquinol-cytochrome c oxidoreductase (cytochrome b-c1 complex, complex III, CIII) and cytochrome c oxidase (complex IV, CIV), that cooperate to transfer electrons derived from NADH and succinate to molecular oxygen, creating an electrochemical gradient over the inner membrane that drives transmembrane transport and the ATP synthase. Cytochrome c oxidase is the component of the respiratory chain that catalyzes the reduction of oxygen to water. Electrons originating from reduced cytochrome c in the intermembrane space (IMS) are transferred via the dinuclear copper A center (CU(A)) of subunit 2 and heme A of subunit 1 to the active site in subunit 1, a binuclear center (BNC) formed by heme A3 and copper B (CU(B)). The BNC reduces molecular oxygen to 2 water molecules using 4 electrons from cytochrome c in the IMS and 4 protons from the mitochondrial matrix.</text>
</comment>
<comment type="catalytic activity">
    <reaction evidence="3">
        <text>4 Fe(II)-[cytochrome c] + O2 + 8 H(+)(in) = 4 Fe(III)-[cytochrome c] + 2 H2O + 4 H(+)(out)</text>
        <dbReference type="Rhea" id="RHEA:11436"/>
        <dbReference type="Rhea" id="RHEA-COMP:10350"/>
        <dbReference type="Rhea" id="RHEA-COMP:14399"/>
        <dbReference type="ChEBI" id="CHEBI:15377"/>
        <dbReference type="ChEBI" id="CHEBI:15378"/>
        <dbReference type="ChEBI" id="CHEBI:15379"/>
        <dbReference type="ChEBI" id="CHEBI:29033"/>
        <dbReference type="ChEBI" id="CHEBI:29034"/>
        <dbReference type="EC" id="7.1.1.9"/>
    </reaction>
    <physiologicalReaction direction="left-to-right" evidence="3">
        <dbReference type="Rhea" id="RHEA:11437"/>
    </physiologicalReaction>
</comment>
<comment type="cofactor">
    <cofactor evidence="2">
        <name>heme</name>
        <dbReference type="ChEBI" id="CHEBI:30413"/>
    </cofactor>
    <text evidence="2">Binds 2 heme A groups non-covalently per subunit.</text>
</comment>
<comment type="cofactor">
    <cofactor evidence="2">
        <name>Cu cation</name>
        <dbReference type="ChEBI" id="CHEBI:23378"/>
    </cofactor>
    <text evidence="2">Binds a copper B center.</text>
</comment>
<comment type="pathway">
    <text evidence="3">Energy metabolism; oxidative phosphorylation.</text>
</comment>
<comment type="subunit">
    <text evidence="1 2">Component of the cytochrome c oxidase (complex IV, CIV), a multisubunit enzyme composed of 14 subunits. The complex is composed of a catalytic core of 3 subunits MT-CO1, MT-CO2 and MT-CO3, encoded in the mitochondrial DNA, and 11 supernumerary subunits COX4I, COX5A, COX5B, COX6A, COX6B, COX6C, COX7A, COX7B, COX7C, COX8 and NDUFA4, which are encoded in the nuclear genome. The complex exists as a monomer or a dimer and forms supercomplexes (SCs) in the inner mitochondrial membrane with NADH-ubiquinone oxidoreductase (complex I, CI) and ubiquinol-cytochrome c oxidoreductase (cytochrome b-c1 complex, complex III, CIII), resulting in different assemblies (supercomplex SCI(1)III(2)IV(1) and megacomplex MCI(2)III(2)IV(2)) (By similarity). As a newly synthesized protein, rapidly incorporates into a multi-subunit assembly intermediate in the inner membrane, called MITRAC (mitochondrial translation regulation assembly intermediate of cytochrome c oxidase) complex, whose core components are COA3/MITRAC12 and COX14. Within the MITRAC complex, interacts with COA3 and with SMIM20/MITRAC7; the interaction with SMIM20 stabilizes the newly synthesized MT-CO1 and prevents its premature turnover. Interacts with TMEM177 in a COX20-dependent manner (By similarity).</text>
</comment>
<comment type="subcellular location">
    <subcellularLocation>
        <location evidence="2">Mitochondrion inner membrane</location>
        <topology evidence="2">Multi-pass membrane protein</topology>
    </subcellularLocation>
</comment>
<comment type="similarity">
    <text evidence="4">Belongs to the heme-copper respiratory oxidase family.</text>
</comment>
<protein>
    <recommendedName>
        <fullName>Cytochrome c oxidase subunit 1</fullName>
        <ecNumber>7.1.1.9</ecNumber>
    </recommendedName>
    <alternativeName>
        <fullName>Cytochrome c oxidase polypeptide I</fullName>
    </alternativeName>
</protein>